<evidence type="ECO:0000255" key="1">
    <source>
        <dbReference type="HAMAP-Rule" id="MF_00185"/>
    </source>
</evidence>
<reference key="1">
    <citation type="submission" date="2006-12" db="EMBL/GenBank/DDBJ databases">
        <title>Complete sequence of Chlorobium phaeobacteroides DSM 266.</title>
        <authorList>
            <consortium name="US DOE Joint Genome Institute"/>
            <person name="Copeland A."/>
            <person name="Lucas S."/>
            <person name="Lapidus A."/>
            <person name="Barry K."/>
            <person name="Detter J.C."/>
            <person name="Glavina del Rio T."/>
            <person name="Hammon N."/>
            <person name="Israni S."/>
            <person name="Pitluck S."/>
            <person name="Goltsman E."/>
            <person name="Schmutz J."/>
            <person name="Larimer F."/>
            <person name="Land M."/>
            <person name="Hauser L."/>
            <person name="Mikhailova N."/>
            <person name="Li T."/>
            <person name="Overmann J."/>
            <person name="Bryant D.A."/>
            <person name="Richardson P."/>
        </authorList>
    </citation>
    <scope>NUCLEOTIDE SEQUENCE [LARGE SCALE GENOMIC DNA]</scope>
    <source>
        <strain>DSM 266 / SMG 266 / 2430</strain>
    </source>
</reference>
<sequence length="319" mass="35957">MHDSDRQKTILAILGPTASGKSALAFSIAKEINAEIISADSRQIYRELNIGTAKPSQETLRQIKHHFVNELSIGDPFTAGNFAREASARIRNILHSGKNVLIAGGSTLYLEALLNGFADLPPADTEKRQQLAIELETFGSKHLFERLRQLDPLQAATLDHTKTQRLVRSLEIIELSGHTVTEMQKKHIQPLADINVITCGLSLPRPLLYEKINRRTDQMLASGLLQEAVALFTKYYPYCDVITTNALQTVGYQELFAYLDEKTDFKTAITLIKQHTRNYAKRQLTFFKNRLNVNWMDAPENEHELSMLTTSCCRMITGN</sequence>
<organism>
    <name type="scientific">Chlorobium phaeobacteroides (strain DSM 266 / SMG 266 / 2430)</name>
    <dbReference type="NCBI Taxonomy" id="290317"/>
    <lineage>
        <taxon>Bacteria</taxon>
        <taxon>Pseudomonadati</taxon>
        <taxon>Chlorobiota</taxon>
        <taxon>Chlorobiia</taxon>
        <taxon>Chlorobiales</taxon>
        <taxon>Chlorobiaceae</taxon>
        <taxon>Chlorobium/Pelodictyon group</taxon>
        <taxon>Chlorobium</taxon>
    </lineage>
</organism>
<feature type="chain" id="PRO_0000377118" description="tRNA dimethylallyltransferase">
    <location>
        <begin position="1"/>
        <end position="319"/>
    </location>
</feature>
<feature type="region of interest" description="Interaction with substrate tRNA" evidence="1">
    <location>
        <begin position="40"/>
        <end position="43"/>
    </location>
</feature>
<feature type="region of interest" description="Interaction with substrate tRNA" evidence="1">
    <location>
        <begin position="164"/>
        <end position="168"/>
    </location>
</feature>
<feature type="binding site" evidence="1">
    <location>
        <begin position="15"/>
        <end position="22"/>
    </location>
    <ligand>
        <name>ATP</name>
        <dbReference type="ChEBI" id="CHEBI:30616"/>
    </ligand>
</feature>
<feature type="binding site" evidence="1">
    <location>
        <begin position="17"/>
        <end position="22"/>
    </location>
    <ligand>
        <name>substrate</name>
    </ligand>
</feature>
<feature type="site" description="Interaction with substrate tRNA" evidence="1">
    <location>
        <position position="106"/>
    </location>
</feature>
<feature type="site" description="Interaction with substrate tRNA" evidence="1">
    <location>
        <position position="128"/>
    </location>
</feature>
<comment type="function">
    <text evidence="1">Catalyzes the transfer of a dimethylallyl group onto the adenine at position 37 in tRNAs that read codons beginning with uridine, leading to the formation of N6-(dimethylallyl)adenosine (i(6)A).</text>
</comment>
<comment type="catalytic activity">
    <reaction evidence="1">
        <text>adenosine(37) in tRNA + dimethylallyl diphosphate = N(6)-dimethylallyladenosine(37) in tRNA + diphosphate</text>
        <dbReference type="Rhea" id="RHEA:26482"/>
        <dbReference type="Rhea" id="RHEA-COMP:10162"/>
        <dbReference type="Rhea" id="RHEA-COMP:10375"/>
        <dbReference type="ChEBI" id="CHEBI:33019"/>
        <dbReference type="ChEBI" id="CHEBI:57623"/>
        <dbReference type="ChEBI" id="CHEBI:74411"/>
        <dbReference type="ChEBI" id="CHEBI:74415"/>
        <dbReference type="EC" id="2.5.1.75"/>
    </reaction>
</comment>
<comment type="cofactor">
    <cofactor evidence="1">
        <name>Mg(2+)</name>
        <dbReference type="ChEBI" id="CHEBI:18420"/>
    </cofactor>
</comment>
<comment type="subunit">
    <text evidence="1">Monomer.</text>
</comment>
<comment type="similarity">
    <text evidence="1">Belongs to the IPP transferase family.</text>
</comment>
<proteinExistence type="inferred from homology"/>
<gene>
    <name evidence="1" type="primary">miaA</name>
    <name type="ordered locus">Cpha266_1081</name>
</gene>
<keyword id="KW-0067">ATP-binding</keyword>
<keyword id="KW-0460">Magnesium</keyword>
<keyword id="KW-0547">Nucleotide-binding</keyword>
<keyword id="KW-1185">Reference proteome</keyword>
<keyword id="KW-0808">Transferase</keyword>
<keyword id="KW-0819">tRNA processing</keyword>
<dbReference type="EC" id="2.5.1.75" evidence="1"/>
<dbReference type="EMBL" id="CP000492">
    <property type="protein sequence ID" value="ABL65122.1"/>
    <property type="molecule type" value="Genomic_DNA"/>
</dbReference>
<dbReference type="RefSeq" id="WP_011744948.1">
    <property type="nucleotide sequence ID" value="NC_008639.1"/>
</dbReference>
<dbReference type="SMR" id="A1BFE5"/>
<dbReference type="STRING" id="290317.Cpha266_1081"/>
<dbReference type="KEGG" id="cph:Cpha266_1081"/>
<dbReference type="eggNOG" id="COG0324">
    <property type="taxonomic scope" value="Bacteria"/>
</dbReference>
<dbReference type="HOGENOM" id="CLU_032616_0_1_10"/>
<dbReference type="OrthoDB" id="9776390at2"/>
<dbReference type="Proteomes" id="UP000008701">
    <property type="component" value="Chromosome"/>
</dbReference>
<dbReference type="GO" id="GO:0005524">
    <property type="term" value="F:ATP binding"/>
    <property type="evidence" value="ECO:0007669"/>
    <property type="project" value="UniProtKB-UniRule"/>
</dbReference>
<dbReference type="GO" id="GO:0052381">
    <property type="term" value="F:tRNA dimethylallyltransferase activity"/>
    <property type="evidence" value="ECO:0007669"/>
    <property type="project" value="UniProtKB-UniRule"/>
</dbReference>
<dbReference type="GO" id="GO:0006400">
    <property type="term" value="P:tRNA modification"/>
    <property type="evidence" value="ECO:0007669"/>
    <property type="project" value="TreeGrafter"/>
</dbReference>
<dbReference type="Gene3D" id="1.10.20.140">
    <property type="match status" value="1"/>
</dbReference>
<dbReference type="Gene3D" id="3.40.50.300">
    <property type="entry name" value="P-loop containing nucleotide triphosphate hydrolases"/>
    <property type="match status" value="1"/>
</dbReference>
<dbReference type="HAMAP" id="MF_00185">
    <property type="entry name" value="IPP_trans"/>
    <property type="match status" value="1"/>
</dbReference>
<dbReference type="InterPro" id="IPR039657">
    <property type="entry name" value="Dimethylallyltransferase"/>
</dbReference>
<dbReference type="InterPro" id="IPR018022">
    <property type="entry name" value="IPT"/>
</dbReference>
<dbReference type="InterPro" id="IPR027417">
    <property type="entry name" value="P-loop_NTPase"/>
</dbReference>
<dbReference type="NCBIfam" id="TIGR00174">
    <property type="entry name" value="miaA"/>
    <property type="match status" value="1"/>
</dbReference>
<dbReference type="PANTHER" id="PTHR11088">
    <property type="entry name" value="TRNA DIMETHYLALLYLTRANSFERASE"/>
    <property type="match status" value="1"/>
</dbReference>
<dbReference type="PANTHER" id="PTHR11088:SF60">
    <property type="entry name" value="TRNA DIMETHYLALLYLTRANSFERASE"/>
    <property type="match status" value="1"/>
</dbReference>
<dbReference type="Pfam" id="PF01715">
    <property type="entry name" value="IPPT"/>
    <property type="match status" value="1"/>
</dbReference>
<dbReference type="SUPFAM" id="SSF52540">
    <property type="entry name" value="P-loop containing nucleoside triphosphate hydrolases"/>
    <property type="match status" value="1"/>
</dbReference>
<name>MIAA_CHLPD</name>
<accession>A1BFE5</accession>
<protein>
    <recommendedName>
        <fullName evidence="1">tRNA dimethylallyltransferase</fullName>
        <ecNumber evidence="1">2.5.1.75</ecNumber>
    </recommendedName>
    <alternativeName>
        <fullName evidence="1">Dimethylallyl diphosphate:tRNA dimethylallyltransferase</fullName>
        <shortName evidence="1">DMAPP:tRNA dimethylallyltransferase</shortName>
        <shortName evidence="1">DMATase</shortName>
    </alternativeName>
    <alternativeName>
        <fullName evidence="1">Isopentenyl-diphosphate:tRNA isopentenyltransferase</fullName>
        <shortName evidence="1">IPP transferase</shortName>
        <shortName evidence="1">IPPT</shortName>
        <shortName evidence="1">IPTase</shortName>
    </alternativeName>
</protein>